<proteinExistence type="inferred from homology"/>
<dbReference type="EMBL" id="AE005174">
    <property type="protein sequence ID" value="AAG55223.1"/>
    <property type="molecule type" value="Genomic_DNA"/>
</dbReference>
<dbReference type="EMBL" id="BA000007">
    <property type="protein sequence ID" value="BAB34350.1"/>
    <property type="molecule type" value="Genomic_DNA"/>
</dbReference>
<dbReference type="PIR" id="C85595">
    <property type="entry name" value="C85595"/>
</dbReference>
<dbReference type="PIR" id="G90744">
    <property type="entry name" value="G90744"/>
</dbReference>
<dbReference type="RefSeq" id="NP_308954.1">
    <property type="nucleotide sequence ID" value="NC_002695.1"/>
</dbReference>
<dbReference type="RefSeq" id="WP_001024876.1">
    <property type="nucleotide sequence ID" value="NZ_VOAI01000006.1"/>
</dbReference>
<dbReference type="SMR" id="P60871"/>
<dbReference type="STRING" id="155864.Z1074"/>
<dbReference type="GeneID" id="917673"/>
<dbReference type="KEGG" id="ece:Z1074"/>
<dbReference type="KEGG" id="ecs:ECs_0927"/>
<dbReference type="PATRIC" id="fig|386585.9.peg.1044"/>
<dbReference type="eggNOG" id="COG0569">
    <property type="taxonomic scope" value="Bacteria"/>
</dbReference>
<dbReference type="eggNOG" id="COG2985">
    <property type="taxonomic scope" value="Bacteria"/>
</dbReference>
<dbReference type="HOGENOM" id="CLU_035023_2_2_6"/>
<dbReference type="OMA" id="IHSQMAD"/>
<dbReference type="Proteomes" id="UP000000558">
    <property type="component" value="Chromosome"/>
</dbReference>
<dbReference type="Proteomes" id="UP000002519">
    <property type="component" value="Chromosome"/>
</dbReference>
<dbReference type="GO" id="GO:0005886">
    <property type="term" value="C:plasma membrane"/>
    <property type="evidence" value="ECO:0007669"/>
    <property type="project" value="UniProtKB-SubCell"/>
</dbReference>
<dbReference type="GO" id="GO:0008324">
    <property type="term" value="F:monoatomic cation transmembrane transporter activity"/>
    <property type="evidence" value="ECO:0007669"/>
    <property type="project" value="InterPro"/>
</dbReference>
<dbReference type="GO" id="GO:0006813">
    <property type="term" value="P:potassium ion transport"/>
    <property type="evidence" value="ECO:0007669"/>
    <property type="project" value="InterPro"/>
</dbReference>
<dbReference type="FunFam" id="3.30.70.1450:FF:000003">
    <property type="entry name" value="Putative transport protein YbjL"/>
    <property type="match status" value="1"/>
</dbReference>
<dbReference type="Gene3D" id="3.30.70.1450">
    <property type="entry name" value="Regulator of K+ conductance, C-terminal domain"/>
    <property type="match status" value="2"/>
</dbReference>
<dbReference type="HAMAP" id="MF_01015">
    <property type="entry name" value="YbjL"/>
    <property type="match status" value="1"/>
</dbReference>
<dbReference type="InterPro" id="IPR050144">
    <property type="entry name" value="AAE_transporter"/>
</dbReference>
<dbReference type="InterPro" id="IPR006037">
    <property type="entry name" value="RCK_C"/>
</dbReference>
<dbReference type="InterPro" id="IPR036721">
    <property type="entry name" value="RCK_C_sf"/>
</dbReference>
<dbReference type="InterPro" id="IPR023017">
    <property type="entry name" value="Transp_YbjL_put"/>
</dbReference>
<dbReference type="InterPro" id="IPR006512">
    <property type="entry name" value="YidE_YbjL"/>
</dbReference>
<dbReference type="NCBIfam" id="NF003440">
    <property type="entry name" value="PRK04972.1"/>
    <property type="match status" value="1"/>
</dbReference>
<dbReference type="NCBIfam" id="TIGR01625">
    <property type="entry name" value="YidE_YbjL_dupl"/>
    <property type="match status" value="2"/>
</dbReference>
<dbReference type="PANTHER" id="PTHR30445">
    <property type="entry name" value="K(+)_H(+) ANTIPORTER SUBUNIT KHTT"/>
    <property type="match status" value="1"/>
</dbReference>
<dbReference type="PANTHER" id="PTHR30445:SF10">
    <property type="entry name" value="TRANSPORT PROTEIN YBJL-RELATED"/>
    <property type="match status" value="1"/>
</dbReference>
<dbReference type="Pfam" id="PF06826">
    <property type="entry name" value="Asp-Al_Ex"/>
    <property type="match status" value="2"/>
</dbReference>
<dbReference type="Pfam" id="PF02080">
    <property type="entry name" value="TrkA_C"/>
    <property type="match status" value="2"/>
</dbReference>
<dbReference type="SUPFAM" id="SSF116726">
    <property type="entry name" value="TrkA C-terminal domain-like"/>
    <property type="match status" value="2"/>
</dbReference>
<dbReference type="PROSITE" id="PS51202">
    <property type="entry name" value="RCK_C"/>
    <property type="match status" value="2"/>
</dbReference>
<accession>P60871</accession>
<accession>P71206</accession>
<accession>P75812</accession>
<comment type="subcellular location">
    <subcellularLocation>
        <location evidence="1">Cell membrane</location>
        <topology evidence="1">Multi-pass membrane protein</topology>
    </subcellularLocation>
</comment>
<comment type="similarity">
    <text evidence="1">Belongs to the AAE transporter (TC 2.A.81) family. YbjL subfamily.</text>
</comment>
<organism>
    <name type="scientific">Escherichia coli O157:H7</name>
    <dbReference type="NCBI Taxonomy" id="83334"/>
    <lineage>
        <taxon>Bacteria</taxon>
        <taxon>Pseudomonadati</taxon>
        <taxon>Pseudomonadota</taxon>
        <taxon>Gammaproteobacteria</taxon>
        <taxon>Enterobacterales</taxon>
        <taxon>Enterobacteriaceae</taxon>
        <taxon>Escherichia</taxon>
    </lineage>
</organism>
<feature type="chain" id="PRO_0000208784" description="Putative transport protein YbjL">
    <location>
        <begin position="1"/>
        <end position="561"/>
    </location>
</feature>
<feature type="transmembrane region" description="Helical" evidence="1">
    <location>
        <begin position="8"/>
        <end position="28"/>
    </location>
</feature>
<feature type="transmembrane region" description="Helical" evidence="1">
    <location>
        <begin position="32"/>
        <end position="52"/>
    </location>
</feature>
<feature type="transmembrane region" description="Helical" evidence="1">
    <location>
        <begin position="66"/>
        <end position="86"/>
    </location>
</feature>
<feature type="transmembrane region" description="Helical" evidence="1">
    <location>
        <begin position="94"/>
        <end position="114"/>
    </location>
</feature>
<feature type="transmembrane region" description="Helical" evidence="1">
    <location>
        <begin position="158"/>
        <end position="178"/>
    </location>
</feature>
<feature type="transmembrane region" description="Helical" evidence="1">
    <location>
        <begin position="383"/>
        <end position="403"/>
    </location>
</feature>
<feature type="transmembrane region" description="Helical" evidence="1">
    <location>
        <begin position="406"/>
        <end position="426"/>
    </location>
</feature>
<feature type="transmembrane region" description="Helical" evidence="1">
    <location>
        <begin position="451"/>
        <end position="471"/>
    </location>
</feature>
<feature type="transmembrane region" description="Helical" evidence="1">
    <location>
        <begin position="475"/>
        <end position="495"/>
    </location>
</feature>
<feature type="transmembrane region" description="Helical" evidence="1">
    <location>
        <begin position="540"/>
        <end position="560"/>
    </location>
</feature>
<feature type="domain" description="RCK C-terminal 1" evidence="1">
    <location>
        <begin position="200"/>
        <end position="288"/>
    </location>
</feature>
<feature type="domain" description="RCK C-terminal 2" evidence="1">
    <location>
        <begin position="292"/>
        <end position="373"/>
    </location>
</feature>
<sequence>MNINVAELLNGNYILLLFVVLALGLCLGKLRLGSIQLGNSIGVLVVSLLLGQQHFSINTDALNLGFMLFIFCVGVEAGPNFFSIFFRDGKNYLMLALVMVGSALVIALGLGKLFGWDIGLTAGMLAGSMTSTPVLVGAGDTLRHSGMESRQLSLALDNLSLGYALTYLIGLVSLIVGARYLPKLQHQDLQTSAQQIARERGLDTDANRKVYLPVIRAYRVGPELVAWTDGKNLRELGIYRQTGCYIERIRRNGILANPDGDAVLQMGDEIALVGYPDAHARLDPSFRNGKEVFDRDLLDMRIVTEEVVVKNHNAVGKRLAQLKLTDHGCFLNRVIRSQIEMPIDDNVVLNKGDVLQVSGDARRVKTIADRIGFISIHSQVTDLLAFCAFFVIGLMIGMITFQFSTFSFGMGNAAGLLFAGIMLGFMRANHPTFGYIPQGALSMVKEFGLMVFMAGVGLSAGSGINNGLGAIGGQMLIAGLIVSLVPVVICFLFGAYVLRMNRALLFGAMMGARTCAPAMEIISDTARSNIPALGYAGTYAIANVLLTLAGTIIVMVWPGLG</sequence>
<protein>
    <recommendedName>
        <fullName evidence="1">Putative transport protein YbjL</fullName>
    </recommendedName>
</protein>
<gene>
    <name evidence="1" type="primary">ybjL</name>
    <name type="ordered locus">Z1074</name>
    <name type="ordered locus">ECs0927</name>
</gene>
<reference key="1">
    <citation type="journal article" date="2001" name="Nature">
        <title>Genome sequence of enterohaemorrhagic Escherichia coli O157:H7.</title>
        <authorList>
            <person name="Perna N.T."/>
            <person name="Plunkett G. III"/>
            <person name="Burland V."/>
            <person name="Mau B."/>
            <person name="Glasner J.D."/>
            <person name="Rose D.J."/>
            <person name="Mayhew G.F."/>
            <person name="Evans P.S."/>
            <person name="Gregor J."/>
            <person name="Kirkpatrick H.A."/>
            <person name="Posfai G."/>
            <person name="Hackett J."/>
            <person name="Klink S."/>
            <person name="Boutin A."/>
            <person name="Shao Y."/>
            <person name="Miller L."/>
            <person name="Grotbeck E.J."/>
            <person name="Davis N.W."/>
            <person name="Lim A."/>
            <person name="Dimalanta E.T."/>
            <person name="Potamousis K."/>
            <person name="Apodaca J."/>
            <person name="Anantharaman T.S."/>
            <person name="Lin J."/>
            <person name="Yen G."/>
            <person name="Schwartz D.C."/>
            <person name="Welch R.A."/>
            <person name="Blattner F.R."/>
        </authorList>
    </citation>
    <scope>NUCLEOTIDE SEQUENCE [LARGE SCALE GENOMIC DNA]</scope>
    <source>
        <strain>O157:H7 / EDL933 / ATCC 700927 / EHEC</strain>
    </source>
</reference>
<reference key="2">
    <citation type="journal article" date="2001" name="DNA Res.">
        <title>Complete genome sequence of enterohemorrhagic Escherichia coli O157:H7 and genomic comparison with a laboratory strain K-12.</title>
        <authorList>
            <person name="Hayashi T."/>
            <person name="Makino K."/>
            <person name="Ohnishi M."/>
            <person name="Kurokawa K."/>
            <person name="Ishii K."/>
            <person name="Yokoyama K."/>
            <person name="Han C.-G."/>
            <person name="Ohtsubo E."/>
            <person name="Nakayama K."/>
            <person name="Murata T."/>
            <person name="Tanaka M."/>
            <person name="Tobe T."/>
            <person name="Iida T."/>
            <person name="Takami H."/>
            <person name="Honda T."/>
            <person name="Sasakawa C."/>
            <person name="Ogasawara N."/>
            <person name="Yasunaga T."/>
            <person name="Kuhara S."/>
            <person name="Shiba T."/>
            <person name="Hattori M."/>
            <person name="Shinagawa H."/>
        </authorList>
    </citation>
    <scope>NUCLEOTIDE SEQUENCE [LARGE SCALE GENOMIC DNA]</scope>
    <source>
        <strain>O157:H7 / Sakai / RIMD 0509952 / EHEC</strain>
    </source>
</reference>
<keyword id="KW-1003">Cell membrane</keyword>
<keyword id="KW-0472">Membrane</keyword>
<keyword id="KW-1185">Reference proteome</keyword>
<keyword id="KW-0677">Repeat</keyword>
<keyword id="KW-0812">Transmembrane</keyword>
<keyword id="KW-1133">Transmembrane helix</keyword>
<keyword id="KW-0813">Transport</keyword>
<evidence type="ECO:0000255" key="1">
    <source>
        <dbReference type="HAMAP-Rule" id="MF_01015"/>
    </source>
</evidence>
<name>YBJL_ECO57</name>